<protein>
    <recommendedName>
        <fullName evidence="1">1-deoxy-D-xylulose 5-phosphate reductoisomerase</fullName>
        <shortName evidence="1">DXP reductoisomerase</shortName>
        <ecNumber evidence="1">1.1.1.267</ecNumber>
    </recommendedName>
    <alternativeName>
        <fullName evidence="1">1-deoxyxylulose-5-phosphate reductoisomerase</fullName>
    </alternativeName>
    <alternativeName>
        <fullName evidence="1">2-C-methyl-D-erythritol 4-phosphate synthase</fullName>
    </alternativeName>
</protein>
<evidence type="ECO:0000255" key="1">
    <source>
        <dbReference type="HAMAP-Rule" id="MF_00183"/>
    </source>
</evidence>
<gene>
    <name evidence="1" type="primary">dxr</name>
    <name type="ordered locus">FTL_0534</name>
</gene>
<accession>Q2A4P9</accession>
<comment type="function">
    <text evidence="1">Catalyzes the NADPH-dependent rearrangement and reduction of 1-deoxy-D-xylulose-5-phosphate (DXP) to 2-C-methyl-D-erythritol 4-phosphate (MEP).</text>
</comment>
<comment type="catalytic activity">
    <reaction evidence="1">
        <text>2-C-methyl-D-erythritol 4-phosphate + NADP(+) = 1-deoxy-D-xylulose 5-phosphate + NADPH + H(+)</text>
        <dbReference type="Rhea" id="RHEA:13717"/>
        <dbReference type="ChEBI" id="CHEBI:15378"/>
        <dbReference type="ChEBI" id="CHEBI:57783"/>
        <dbReference type="ChEBI" id="CHEBI:57792"/>
        <dbReference type="ChEBI" id="CHEBI:58262"/>
        <dbReference type="ChEBI" id="CHEBI:58349"/>
        <dbReference type="EC" id="1.1.1.267"/>
    </reaction>
    <physiologicalReaction direction="right-to-left" evidence="1">
        <dbReference type="Rhea" id="RHEA:13719"/>
    </physiologicalReaction>
</comment>
<comment type="cofactor">
    <cofactor evidence="1">
        <name>Mg(2+)</name>
        <dbReference type="ChEBI" id="CHEBI:18420"/>
    </cofactor>
    <cofactor evidence="1">
        <name>Mn(2+)</name>
        <dbReference type="ChEBI" id="CHEBI:29035"/>
    </cofactor>
</comment>
<comment type="pathway">
    <text evidence="1">Isoprenoid biosynthesis; isopentenyl diphosphate biosynthesis via DXP pathway; isopentenyl diphosphate from 1-deoxy-D-xylulose 5-phosphate: step 1/6.</text>
</comment>
<comment type="similarity">
    <text evidence="1">Belongs to the DXR family.</text>
</comment>
<keyword id="KW-0414">Isoprene biosynthesis</keyword>
<keyword id="KW-0464">Manganese</keyword>
<keyword id="KW-0479">Metal-binding</keyword>
<keyword id="KW-0521">NADP</keyword>
<keyword id="KW-0560">Oxidoreductase</keyword>
<keyword id="KW-1185">Reference proteome</keyword>
<proteinExistence type="inferred from homology"/>
<reference key="1">
    <citation type="submission" date="2006-03" db="EMBL/GenBank/DDBJ databases">
        <title>Complete genome sequence of Francisella tularensis LVS (Live Vaccine Strain).</title>
        <authorList>
            <person name="Chain P."/>
            <person name="Larimer F."/>
            <person name="Land M."/>
            <person name="Stilwagen S."/>
            <person name="Larsson P."/>
            <person name="Bearden S."/>
            <person name="Chu M."/>
            <person name="Oyston P."/>
            <person name="Forsman M."/>
            <person name="Andersson S."/>
            <person name="Lindler L."/>
            <person name="Titball R."/>
            <person name="Garcia E."/>
        </authorList>
    </citation>
    <scope>NUCLEOTIDE SEQUENCE [LARGE SCALE GENOMIC DNA]</scope>
    <source>
        <strain>LVS</strain>
    </source>
</reference>
<sequence length="385" mass="42829">MFKKTKITILGATGSIGDSTLAVIRETNDFEVFALTAFSNVEKLAELCQEFKPKFAVVPDLSKKQKLQSLVTDVEVLVGESGLEKVSSLAEIDIVMSAIVGIAGLKPTFAAAKAGKKILLANKESLVTAGHLLIDEVVKNNAQLIPVDSEHNAIFQCIDNHDKKCLPEIDKIILTASGGPFRDKQLHELTDVTPEQACNHPNWQMGRKISVDSSTMVNKALEVIEAYWLFSVSADKIGVLIHPQSVTHSIVRYVDGSYIAQLGVPDMKTPIANAMYYPKRGSVNVESLDFTKYQLTFREACFERFEALKIVFNNLQNKNYAANIVFNAANEELVAAFLNKKIKYLEIIEVNKKVTKELNFENPKNIEEVFEIDRKTREYVDSVLG</sequence>
<feature type="chain" id="PRO_1000020262" description="1-deoxy-D-xylulose 5-phosphate reductoisomerase">
    <location>
        <begin position="1"/>
        <end position="385"/>
    </location>
</feature>
<feature type="binding site" evidence="1">
    <location>
        <position position="13"/>
    </location>
    <ligand>
        <name>NADPH</name>
        <dbReference type="ChEBI" id="CHEBI:57783"/>
    </ligand>
</feature>
<feature type="binding site" evidence="1">
    <location>
        <position position="14"/>
    </location>
    <ligand>
        <name>NADPH</name>
        <dbReference type="ChEBI" id="CHEBI:57783"/>
    </ligand>
</feature>
<feature type="binding site" evidence="1">
    <location>
        <position position="15"/>
    </location>
    <ligand>
        <name>NADPH</name>
        <dbReference type="ChEBI" id="CHEBI:57783"/>
    </ligand>
</feature>
<feature type="binding site" evidence="1">
    <location>
        <position position="16"/>
    </location>
    <ligand>
        <name>NADPH</name>
        <dbReference type="ChEBI" id="CHEBI:57783"/>
    </ligand>
</feature>
<feature type="binding site" evidence="1">
    <location>
        <position position="40"/>
    </location>
    <ligand>
        <name>NADPH</name>
        <dbReference type="ChEBI" id="CHEBI:57783"/>
    </ligand>
</feature>
<feature type="binding site" evidence="1">
    <location>
        <position position="122"/>
    </location>
    <ligand>
        <name>NADPH</name>
        <dbReference type="ChEBI" id="CHEBI:57783"/>
    </ligand>
</feature>
<feature type="binding site" evidence="1">
    <location>
        <position position="123"/>
    </location>
    <ligand>
        <name>1-deoxy-D-xylulose 5-phosphate</name>
        <dbReference type="ChEBI" id="CHEBI:57792"/>
    </ligand>
</feature>
<feature type="binding site" evidence="1">
    <location>
        <position position="124"/>
    </location>
    <ligand>
        <name>NADPH</name>
        <dbReference type="ChEBI" id="CHEBI:57783"/>
    </ligand>
</feature>
<feature type="binding site" evidence="1">
    <location>
        <position position="148"/>
    </location>
    <ligand>
        <name>Mn(2+)</name>
        <dbReference type="ChEBI" id="CHEBI:29035"/>
    </ligand>
</feature>
<feature type="binding site" evidence="1">
    <location>
        <position position="149"/>
    </location>
    <ligand>
        <name>1-deoxy-D-xylulose 5-phosphate</name>
        <dbReference type="ChEBI" id="CHEBI:57792"/>
    </ligand>
</feature>
<feature type="binding site" evidence="1">
    <location>
        <position position="150"/>
    </location>
    <ligand>
        <name>1-deoxy-D-xylulose 5-phosphate</name>
        <dbReference type="ChEBI" id="CHEBI:57792"/>
    </ligand>
</feature>
<feature type="binding site" evidence="1">
    <location>
        <position position="150"/>
    </location>
    <ligand>
        <name>Mn(2+)</name>
        <dbReference type="ChEBI" id="CHEBI:29035"/>
    </ligand>
</feature>
<feature type="binding site" evidence="1">
    <location>
        <position position="177"/>
    </location>
    <ligand>
        <name>1-deoxy-D-xylulose 5-phosphate</name>
        <dbReference type="ChEBI" id="CHEBI:57792"/>
    </ligand>
</feature>
<feature type="binding site" evidence="1">
    <location>
        <position position="200"/>
    </location>
    <ligand>
        <name>1-deoxy-D-xylulose 5-phosphate</name>
        <dbReference type="ChEBI" id="CHEBI:57792"/>
    </ligand>
</feature>
<feature type="binding site" evidence="1">
    <location>
        <position position="206"/>
    </location>
    <ligand>
        <name>NADPH</name>
        <dbReference type="ChEBI" id="CHEBI:57783"/>
    </ligand>
</feature>
<feature type="binding site" evidence="1">
    <location>
        <position position="213"/>
    </location>
    <ligand>
        <name>1-deoxy-D-xylulose 5-phosphate</name>
        <dbReference type="ChEBI" id="CHEBI:57792"/>
    </ligand>
</feature>
<feature type="binding site" evidence="1">
    <location>
        <position position="218"/>
    </location>
    <ligand>
        <name>1-deoxy-D-xylulose 5-phosphate</name>
        <dbReference type="ChEBI" id="CHEBI:57792"/>
    </ligand>
</feature>
<feature type="binding site" evidence="1">
    <location>
        <position position="219"/>
    </location>
    <ligand>
        <name>1-deoxy-D-xylulose 5-phosphate</name>
        <dbReference type="ChEBI" id="CHEBI:57792"/>
    </ligand>
</feature>
<feature type="binding site" evidence="1">
    <location>
        <position position="222"/>
    </location>
    <ligand>
        <name>1-deoxy-D-xylulose 5-phosphate</name>
        <dbReference type="ChEBI" id="CHEBI:57792"/>
    </ligand>
</feature>
<feature type="binding site" evidence="1">
    <location>
        <position position="222"/>
    </location>
    <ligand>
        <name>Mn(2+)</name>
        <dbReference type="ChEBI" id="CHEBI:29035"/>
    </ligand>
</feature>
<name>DXR_FRATH</name>
<dbReference type="EC" id="1.1.1.267" evidence="1"/>
<dbReference type="EMBL" id="AM233362">
    <property type="protein sequence ID" value="CAJ78974.1"/>
    <property type="molecule type" value="Genomic_DNA"/>
</dbReference>
<dbReference type="RefSeq" id="WP_003014851.1">
    <property type="nucleotide sequence ID" value="NZ_CP009694.1"/>
</dbReference>
<dbReference type="SMR" id="Q2A4P9"/>
<dbReference type="KEGG" id="ftl:FTL_0534"/>
<dbReference type="UniPathway" id="UPA00056">
    <property type="reaction ID" value="UER00092"/>
</dbReference>
<dbReference type="Proteomes" id="UP000001944">
    <property type="component" value="Chromosome"/>
</dbReference>
<dbReference type="GO" id="GO:0030604">
    <property type="term" value="F:1-deoxy-D-xylulose-5-phosphate reductoisomerase activity"/>
    <property type="evidence" value="ECO:0007669"/>
    <property type="project" value="UniProtKB-UniRule"/>
</dbReference>
<dbReference type="GO" id="GO:0030145">
    <property type="term" value="F:manganese ion binding"/>
    <property type="evidence" value="ECO:0007669"/>
    <property type="project" value="TreeGrafter"/>
</dbReference>
<dbReference type="GO" id="GO:0070402">
    <property type="term" value="F:NADPH binding"/>
    <property type="evidence" value="ECO:0007669"/>
    <property type="project" value="InterPro"/>
</dbReference>
<dbReference type="GO" id="GO:0051484">
    <property type="term" value="P:isopentenyl diphosphate biosynthetic process, methylerythritol 4-phosphate pathway involved in terpenoid biosynthetic process"/>
    <property type="evidence" value="ECO:0007669"/>
    <property type="project" value="TreeGrafter"/>
</dbReference>
<dbReference type="FunFam" id="3.40.50.720:FF:000045">
    <property type="entry name" value="1-deoxy-D-xylulose 5-phosphate reductoisomerase"/>
    <property type="match status" value="1"/>
</dbReference>
<dbReference type="Gene3D" id="1.10.1740.10">
    <property type="match status" value="1"/>
</dbReference>
<dbReference type="Gene3D" id="3.40.50.720">
    <property type="entry name" value="NAD(P)-binding Rossmann-like Domain"/>
    <property type="match status" value="1"/>
</dbReference>
<dbReference type="HAMAP" id="MF_00183">
    <property type="entry name" value="DXP_reductoisom"/>
    <property type="match status" value="1"/>
</dbReference>
<dbReference type="InterPro" id="IPR003821">
    <property type="entry name" value="DXP_reductoisomerase"/>
</dbReference>
<dbReference type="InterPro" id="IPR013644">
    <property type="entry name" value="DXP_reductoisomerase_C"/>
</dbReference>
<dbReference type="InterPro" id="IPR013512">
    <property type="entry name" value="DXP_reductoisomerase_N"/>
</dbReference>
<dbReference type="InterPro" id="IPR026877">
    <property type="entry name" value="DXPR_C"/>
</dbReference>
<dbReference type="InterPro" id="IPR036169">
    <property type="entry name" value="DXPR_C_sf"/>
</dbReference>
<dbReference type="InterPro" id="IPR036291">
    <property type="entry name" value="NAD(P)-bd_dom_sf"/>
</dbReference>
<dbReference type="NCBIfam" id="TIGR00243">
    <property type="entry name" value="Dxr"/>
    <property type="match status" value="1"/>
</dbReference>
<dbReference type="PANTHER" id="PTHR30525">
    <property type="entry name" value="1-DEOXY-D-XYLULOSE 5-PHOSPHATE REDUCTOISOMERASE"/>
    <property type="match status" value="1"/>
</dbReference>
<dbReference type="PANTHER" id="PTHR30525:SF0">
    <property type="entry name" value="1-DEOXY-D-XYLULOSE 5-PHOSPHATE REDUCTOISOMERASE, CHLOROPLASTIC"/>
    <property type="match status" value="1"/>
</dbReference>
<dbReference type="Pfam" id="PF08436">
    <property type="entry name" value="DXP_redisom_C"/>
    <property type="match status" value="1"/>
</dbReference>
<dbReference type="Pfam" id="PF02670">
    <property type="entry name" value="DXP_reductoisom"/>
    <property type="match status" value="1"/>
</dbReference>
<dbReference type="Pfam" id="PF13288">
    <property type="entry name" value="DXPR_C"/>
    <property type="match status" value="1"/>
</dbReference>
<dbReference type="PIRSF" id="PIRSF006205">
    <property type="entry name" value="Dxp_reductismrs"/>
    <property type="match status" value="1"/>
</dbReference>
<dbReference type="SUPFAM" id="SSF69055">
    <property type="entry name" value="1-deoxy-D-xylulose-5-phosphate reductoisomerase, C-terminal domain"/>
    <property type="match status" value="1"/>
</dbReference>
<dbReference type="SUPFAM" id="SSF55347">
    <property type="entry name" value="Glyceraldehyde-3-phosphate dehydrogenase-like, C-terminal domain"/>
    <property type="match status" value="1"/>
</dbReference>
<dbReference type="SUPFAM" id="SSF51735">
    <property type="entry name" value="NAD(P)-binding Rossmann-fold domains"/>
    <property type="match status" value="1"/>
</dbReference>
<organism>
    <name type="scientific">Francisella tularensis subsp. holarctica (strain LVS)</name>
    <dbReference type="NCBI Taxonomy" id="376619"/>
    <lineage>
        <taxon>Bacteria</taxon>
        <taxon>Pseudomonadati</taxon>
        <taxon>Pseudomonadota</taxon>
        <taxon>Gammaproteobacteria</taxon>
        <taxon>Thiotrichales</taxon>
        <taxon>Francisellaceae</taxon>
        <taxon>Francisella</taxon>
    </lineage>
</organism>